<reference key="1">
    <citation type="submission" date="2008-02" db="EMBL/GenBank/DDBJ databases">
        <title>Complete sequence of Pseudomonas putida W619.</title>
        <authorList>
            <person name="Copeland A."/>
            <person name="Lucas S."/>
            <person name="Lapidus A."/>
            <person name="Barry K."/>
            <person name="Detter J.C."/>
            <person name="Glavina del Rio T."/>
            <person name="Dalin E."/>
            <person name="Tice H."/>
            <person name="Pitluck S."/>
            <person name="Chain P."/>
            <person name="Malfatti S."/>
            <person name="Shin M."/>
            <person name="Vergez L."/>
            <person name="Schmutz J."/>
            <person name="Larimer F."/>
            <person name="Land M."/>
            <person name="Hauser L."/>
            <person name="Kyrpides N."/>
            <person name="Kim E."/>
            <person name="Taghavi S."/>
            <person name="Vangronsveld D."/>
            <person name="van der Lelie D."/>
            <person name="Richardson P."/>
        </authorList>
    </citation>
    <scope>NUCLEOTIDE SEQUENCE [LARGE SCALE GENOMIC DNA]</scope>
    <source>
        <strain>W619</strain>
    </source>
</reference>
<sequence>MSSTRIPVAIIGSGNIGTDLMIKILRCSDTLEVGAMVGIDPASDGLARAERLGVPTTAGGIDGLLALPNFKEIRIAFDATSAGAHKVHDSKLRAHGVRIIDLTPAAVGPYVVPVVNFAEHAHEPNLNMVTCGGQATIPIVHAVAGVAPVHYAEIVAAISSKSAGPGTRANIDEFTETTSRAIVEVGGAARGKAIIVLNPAEPPLIMRDTVYCFVPLDADTQAIVDAVEQRVAEVNRYVPGYRLKQHVQFEHFTENNRQNIPGLGWSTGIKVAVYLEVEGAGHYLPAYAGNLDIMTSAALTVAERIAQAQFTDQGL</sequence>
<protein>
    <recommendedName>
        <fullName evidence="1">Acetaldehyde dehydrogenase 2</fullName>
        <ecNumber evidence="1">1.2.1.10</ecNumber>
    </recommendedName>
    <alternativeName>
        <fullName evidence="1">Acetaldehyde dehydrogenase [acetylating] 2</fullName>
    </alternativeName>
</protein>
<proteinExistence type="inferred from homology"/>
<accession>B1J6Y2</accession>
<evidence type="ECO:0000255" key="1">
    <source>
        <dbReference type="HAMAP-Rule" id="MF_01657"/>
    </source>
</evidence>
<keyword id="KW-0058">Aromatic hydrocarbons catabolism</keyword>
<keyword id="KW-0520">NAD</keyword>
<keyword id="KW-0560">Oxidoreductase</keyword>
<gene>
    <name type="ordered locus">PputW619_2008</name>
</gene>
<feature type="chain" id="PRO_0000387710" description="Acetaldehyde dehydrogenase 2">
    <location>
        <begin position="1"/>
        <end position="315"/>
    </location>
</feature>
<feature type="active site" description="Acyl-thioester intermediate" evidence="1">
    <location>
        <position position="131"/>
    </location>
</feature>
<feature type="binding site" evidence="1">
    <location>
        <begin position="13"/>
        <end position="16"/>
    </location>
    <ligand>
        <name>NAD(+)</name>
        <dbReference type="ChEBI" id="CHEBI:57540"/>
    </ligand>
</feature>
<feature type="binding site" evidence="1">
    <location>
        <begin position="162"/>
        <end position="170"/>
    </location>
    <ligand>
        <name>NAD(+)</name>
        <dbReference type="ChEBI" id="CHEBI:57540"/>
    </ligand>
</feature>
<feature type="binding site" evidence="1">
    <location>
        <position position="290"/>
    </location>
    <ligand>
        <name>NAD(+)</name>
        <dbReference type="ChEBI" id="CHEBI:57540"/>
    </ligand>
</feature>
<name>ACDH2_PSEPW</name>
<comment type="catalytic activity">
    <reaction evidence="1">
        <text>acetaldehyde + NAD(+) + CoA = acetyl-CoA + NADH + H(+)</text>
        <dbReference type="Rhea" id="RHEA:23288"/>
        <dbReference type="ChEBI" id="CHEBI:15343"/>
        <dbReference type="ChEBI" id="CHEBI:15378"/>
        <dbReference type="ChEBI" id="CHEBI:57287"/>
        <dbReference type="ChEBI" id="CHEBI:57288"/>
        <dbReference type="ChEBI" id="CHEBI:57540"/>
        <dbReference type="ChEBI" id="CHEBI:57945"/>
        <dbReference type="EC" id="1.2.1.10"/>
    </reaction>
</comment>
<comment type="similarity">
    <text evidence="1">Belongs to the acetaldehyde dehydrogenase family.</text>
</comment>
<organism>
    <name type="scientific">Pseudomonas putida (strain W619)</name>
    <dbReference type="NCBI Taxonomy" id="390235"/>
    <lineage>
        <taxon>Bacteria</taxon>
        <taxon>Pseudomonadati</taxon>
        <taxon>Pseudomonadota</taxon>
        <taxon>Gammaproteobacteria</taxon>
        <taxon>Pseudomonadales</taxon>
        <taxon>Pseudomonadaceae</taxon>
        <taxon>Pseudomonas</taxon>
    </lineage>
</organism>
<dbReference type="EC" id="1.2.1.10" evidence="1"/>
<dbReference type="EMBL" id="CP000949">
    <property type="protein sequence ID" value="ACA72508.1"/>
    <property type="molecule type" value="Genomic_DNA"/>
</dbReference>
<dbReference type="SMR" id="B1J6Y2"/>
<dbReference type="STRING" id="390235.PputW619_2008"/>
<dbReference type="KEGG" id="ppw:PputW619_2008"/>
<dbReference type="eggNOG" id="COG4569">
    <property type="taxonomic scope" value="Bacteria"/>
</dbReference>
<dbReference type="HOGENOM" id="CLU_062208_0_0_6"/>
<dbReference type="OrthoDB" id="9786743at2"/>
<dbReference type="GO" id="GO:0008774">
    <property type="term" value="F:acetaldehyde dehydrogenase (acetylating) activity"/>
    <property type="evidence" value="ECO:0007669"/>
    <property type="project" value="UniProtKB-UniRule"/>
</dbReference>
<dbReference type="GO" id="GO:0051287">
    <property type="term" value="F:NAD binding"/>
    <property type="evidence" value="ECO:0007669"/>
    <property type="project" value="UniProtKB-UniRule"/>
</dbReference>
<dbReference type="GO" id="GO:0009056">
    <property type="term" value="P:catabolic process"/>
    <property type="evidence" value="ECO:0007669"/>
    <property type="project" value="UniProtKB-KW"/>
</dbReference>
<dbReference type="CDD" id="cd23933">
    <property type="entry name" value="ALDH_C"/>
    <property type="match status" value="1"/>
</dbReference>
<dbReference type="Gene3D" id="3.30.360.10">
    <property type="entry name" value="Dihydrodipicolinate Reductase, domain 2"/>
    <property type="match status" value="1"/>
</dbReference>
<dbReference type="Gene3D" id="3.40.50.720">
    <property type="entry name" value="NAD(P)-binding Rossmann-like Domain"/>
    <property type="match status" value="1"/>
</dbReference>
<dbReference type="HAMAP" id="MF_01657">
    <property type="entry name" value="Ac_ald_DH_ac"/>
    <property type="match status" value="1"/>
</dbReference>
<dbReference type="InterPro" id="IPR003361">
    <property type="entry name" value="Acetaldehyde_dehydrogenase"/>
</dbReference>
<dbReference type="InterPro" id="IPR015426">
    <property type="entry name" value="Acetylaldehyde_DH_C"/>
</dbReference>
<dbReference type="InterPro" id="IPR036291">
    <property type="entry name" value="NAD(P)-bd_dom_sf"/>
</dbReference>
<dbReference type="InterPro" id="IPR000534">
    <property type="entry name" value="Semialdehyde_DH_NAD-bd"/>
</dbReference>
<dbReference type="NCBIfam" id="TIGR03215">
    <property type="entry name" value="ac_ald_DH_ac"/>
    <property type="match status" value="1"/>
</dbReference>
<dbReference type="NCBIfam" id="NF006157">
    <property type="entry name" value="PRK08300.1"/>
    <property type="match status" value="1"/>
</dbReference>
<dbReference type="Pfam" id="PF09290">
    <property type="entry name" value="AcetDehyd-dimer"/>
    <property type="match status" value="1"/>
</dbReference>
<dbReference type="Pfam" id="PF01118">
    <property type="entry name" value="Semialdhyde_dh"/>
    <property type="match status" value="1"/>
</dbReference>
<dbReference type="PIRSF" id="PIRSF015689">
    <property type="entry name" value="Actaldh_dh_actl"/>
    <property type="match status" value="1"/>
</dbReference>
<dbReference type="SMART" id="SM00859">
    <property type="entry name" value="Semialdhyde_dh"/>
    <property type="match status" value="1"/>
</dbReference>
<dbReference type="SUPFAM" id="SSF55347">
    <property type="entry name" value="Glyceraldehyde-3-phosphate dehydrogenase-like, C-terminal domain"/>
    <property type="match status" value="1"/>
</dbReference>
<dbReference type="SUPFAM" id="SSF51735">
    <property type="entry name" value="NAD(P)-binding Rossmann-fold domains"/>
    <property type="match status" value="1"/>
</dbReference>